<proteinExistence type="evidence at transcript level"/>
<evidence type="ECO:0000250" key="1"/>
<evidence type="ECO:0000250" key="2">
    <source>
        <dbReference type="UniProtKB" id="P08192"/>
    </source>
</evidence>
<evidence type="ECO:0000269" key="3">
    <source>
    </source>
</evidence>
<evidence type="ECO:0000269" key="4">
    <source>
    </source>
</evidence>
<evidence type="ECO:0000305" key="5"/>
<keyword id="KW-0067">ATP-binding</keyword>
<keyword id="KW-0963">Cytoplasm</keyword>
<keyword id="KW-0436">Ligase</keyword>
<keyword id="KW-0460">Magnesium</keyword>
<keyword id="KW-0472">Membrane</keyword>
<keyword id="KW-0479">Metal-binding</keyword>
<keyword id="KW-0496">Mitochondrion</keyword>
<keyword id="KW-0999">Mitochondrion inner membrane</keyword>
<keyword id="KW-0547">Nucleotide-binding</keyword>
<keyword id="KW-0554">One-carbon metabolism</keyword>
<keyword id="KW-1185">Reference proteome</keyword>
<accession>O74742</accession>
<accession>P78906</accession>
<accession>Q9USF3</accession>
<organism>
    <name type="scientific">Schizosaccharomyces pombe (strain 972 / ATCC 24843)</name>
    <name type="common">Fission yeast</name>
    <dbReference type="NCBI Taxonomy" id="284812"/>
    <lineage>
        <taxon>Eukaryota</taxon>
        <taxon>Fungi</taxon>
        <taxon>Dikarya</taxon>
        <taxon>Ascomycota</taxon>
        <taxon>Taphrinomycotina</taxon>
        <taxon>Schizosaccharomycetes</taxon>
        <taxon>Schizosaccharomycetales</taxon>
        <taxon>Schizosaccharomycetaceae</taxon>
        <taxon>Schizosaccharomyces</taxon>
    </lineage>
</organism>
<gene>
    <name type="primary">met7</name>
    <name type="ORF">SPBC1709.17</name>
</gene>
<dbReference type="EC" id="6.3.2.17"/>
<dbReference type="EMBL" id="CU329671">
    <property type="protein sequence ID" value="CAA21256.1"/>
    <property type="molecule type" value="Genomic_DNA"/>
</dbReference>
<dbReference type="EMBL" id="AB027795">
    <property type="protein sequence ID" value="BAA87099.1"/>
    <property type="molecule type" value="Genomic_DNA"/>
</dbReference>
<dbReference type="EMBL" id="D89257">
    <property type="protein sequence ID" value="BAA13918.1"/>
    <property type="molecule type" value="mRNA"/>
</dbReference>
<dbReference type="PIR" id="T39645">
    <property type="entry name" value="T39645"/>
</dbReference>
<dbReference type="PIR" id="T43182">
    <property type="entry name" value="T43182"/>
</dbReference>
<dbReference type="RefSeq" id="NP_595450.1">
    <property type="nucleotide sequence ID" value="NM_001021359.2"/>
</dbReference>
<dbReference type="SMR" id="O74742"/>
<dbReference type="FunCoup" id="O74742">
    <property type="interactions" value="512"/>
</dbReference>
<dbReference type="STRING" id="284812.O74742"/>
<dbReference type="PaxDb" id="4896-SPBC1709.17.1"/>
<dbReference type="EnsemblFungi" id="SPBC1709.17.1">
    <property type="protein sequence ID" value="SPBC1709.17.1:pep"/>
    <property type="gene ID" value="SPBC1709.17"/>
</dbReference>
<dbReference type="GeneID" id="2540103"/>
<dbReference type="KEGG" id="spo:2540103"/>
<dbReference type="PomBase" id="SPBC1709.17">
    <property type="gene designation" value="met7"/>
</dbReference>
<dbReference type="VEuPathDB" id="FungiDB:SPBC1709.17"/>
<dbReference type="eggNOG" id="KOG2525">
    <property type="taxonomic scope" value="Eukaryota"/>
</dbReference>
<dbReference type="HOGENOM" id="CLU_015869_0_1_1"/>
<dbReference type="InParanoid" id="O74742"/>
<dbReference type="OMA" id="THALFCT"/>
<dbReference type="PhylomeDB" id="O74742"/>
<dbReference type="Reactome" id="R-SPO-196757">
    <property type="pathway name" value="Metabolism of folate and pterines"/>
</dbReference>
<dbReference type="UniPathway" id="UPA00850"/>
<dbReference type="PRO" id="PR:O74742"/>
<dbReference type="Proteomes" id="UP000002485">
    <property type="component" value="Chromosome II"/>
</dbReference>
<dbReference type="GO" id="GO:0005737">
    <property type="term" value="C:cytoplasm"/>
    <property type="evidence" value="ECO:0007005"/>
    <property type="project" value="PomBase"/>
</dbReference>
<dbReference type="GO" id="GO:0005829">
    <property type="term" value="C:cytosol"/>
    <property type="evidence" value="ECO:0007005"/>
    <property type="project" value="PomBase"/>
</dbReference>
<dbReference type="GO" id="GO:0005743">
    <property type="term" value="C:mitochondrial inner membrane"/>
    <property type="evidence" value="ECO:0007669"/>
    <property type="project" value="UniProtKB-SubCell"/>
</dbReference>
<dbReference type="GO" id="GO:0005759">
    <property type="term" value="C:mitochondrial matrix"/>
    <property type="evidence" value="ECO:0007669"/>
    <property type="project" value="UniProtKB-SubCell"/>
</dbReference>
<dbReference type="GO" id="GO:0005739">
    <property type="term" value="C:mitochondrion"/>
    <property type="evidence" value="ECO:0000318"/>
    <property type="project" value="GO_Central"/>
</dbReference>
<dbReference type="GO" id="GO:0005634">
    <property type="term" value="C:nucleus"/>
    <property type="evidence" value="ECO:0007005"/>
    <property type="project" value="PomBase"/>
</dbReference>
<dbReference type="GO" id="GO:0005524">
    <property type="term" value="F:ATP binding"/>
    <property type="evidence" value="ECO:0007669"/>
    <property type="project" value="UniProtKB-KW"/>
</dbReference>
<dbReference type="GO" id="GO:0046872">
    <property type="term" value="F:metal ion binding"/>
    <property type="evidence" value="ECO:0007669"/>
    <property type="project" value="UniProtKB-KW"/>
</dbReference>
<dbReference type="GO" id="GO:0004326">
    <property type="term" value="F:tetrahydrofolylpolyglutamate synthase activity"/>
    <property type="evidence" value="ECO:0000318"/>
    <property type="project" value="GO_Central"/>
</dbReference>
<dbReference type="GO" id="GO:0006536">
    <property type="term" value="P:glutamate metabolic process"/>
    <property type="evidence" value="ECO:0000303"/>
    <property type="project" value="PomBase"/>
</dbReference>
<dbReference type="GO" id="GO:0006730">
    <property type="term" value="P:one-carbon metabolic process"/>
    <property type="evidence" value="ECO:0000250"/>
    <property type="project" value="PomBase"/>
</dbReference>
<dbReference type="GO" id="GO:0046901">
    <property type="term" value="P:tetrahydrofolylpolyglutamate biosynthetic process"/>
    <property type="evidence" value="ECO:0000318"/>
    <property type="project" value="GO_Central"/>
</dbReference>
<dbReference type="FunFam" id="3.40.1190.10:FF:000009">
    <property type="entry name" value="Folylpolyglutamate synthase"/>
    <property type="match status" value="1"/>
</dbReference>
<dbReference type="Gene3D" id="3.90.190.20">
    <property type="entry name" value="Mur ligase, C-terminal domain"/>
    <property type="match status" value="1"/>
</dbReference>
<dbReference type="Gene3D" id="3.40.1190.10">
    <property type="entry name" value="Mur-like, catalytic domain"/>
    <property type="match status" value="1"/>
</dbReference>
<dbReference type="InterPro" id="IPR001645">
    <property type="entry name" value="Folylpolyglutamate_synth"/>
</dbReference>
<dbReference type="InterPro" id="IPR018109">
    <property type="entry name" value="Folylpolyglutamate_synth_CS"/>
</dbReference>
<dbReference type="InterPro" id="IPR023600">
    <property type="entry name" value="Folylpolyglutamate_synth_euk"/>
</dbReference>
<dbReference type="InterPro" id="IPR036565">
    <property type="entry name" value="Mur-like_cat_sf"/>
</dbReference>
<dbReference type="InterPro" id="IPR036615">
    <property type="entry name" value="Mur_ligase_C_dom_sf"/>
</dbReference>
<dbReference type="NCBIfam" id="TIGR01499">
    <property type="entry name" value="folC"/>
    <property type="match status" value="1"/>
</dbReference>
<dbReference type="PANTHER" id="PTHR11136:SF5">
    <property type="entry name" value="FOLYLPOLYGLUTAMATE SYNTHASE, MITOCHONDRIAL"/>
    <property type="match status" value="1"/>
</dbReference>
<dbReference type="PANTHER" id="PTHR11136">
    <property type="entry name" value="FOLYLPOLYGLUTAMATE SYNTHASE-RELATED"/>
    <property type="match status" value="1"/>
</dbReference>
<dbReference type="PIRSF" id="PIRSF038895">
    <property type="entry name" value="FPGS"/>
    <property type="match status" value="1"/>
</dbReference>
<dbReference type="SUPFAM" id="SSF53623">
    <property type="entry name" value="MurD-like peptide ligases, catalytic domain"/>
    <property type="match status" value="1"/>
</dbReference>
<dbReference type="SUPFAM" id="SSF53244">
    <property type="entry name" value="MurD-like peptide ligases, peptide-binding domain"/>
    <property type="match status" value="1"/>
</dbReference>
<dbReference type="PROSITE" id="PS01011">
    <property type="entry name" value="FOLYLPOLYGLU_SYNT_1"/>
    <property type="match status" value="1"/>
</dbReference>
<dbReference type="PROSITE" id="PS01012">
    <property type="entry name" value="FOLYLPOLYGLU_SYNT_2"/>
    <property type="match status" value="1"/>
</dbReference>
<comment type="function">
    <text evidence="1">Catalyzes conversion of folates to polyglutamate derivatives allowing concentration of folate compounds in the cell and the intracellular retention of these cofactors, which are important substrates for most of the folate-dependent enzymes that are involved in one-carbon transfer reactions involved in purine, pyrimidine and amino acid synthesis.</text>
</comment>
<comment type="catalytic activity">
    <reaction>
        <text>(6S)-5,6,7,8-tetrahydrofolyl-(gamma-L-Glu)(n) + L-glutamate + ATP = (6S)-5,6,7,8-tetrahydrofolyl-(gamma-L-Glu)(n+1) + ADP + phosphate + H(+)</text>
        <dbReference type="Rhea" id="RHEA:10580"/>
        <dbReference type="Rhea" id="RHEA-COMP:14738"/>
        <dbReference type="Rhea" id="RHEA-COMP:14740"/>
        <dbReference type="ChEBI" id="CHEBI:15378"/>
        <dbReference type="ChEBI" id="CHEBI:29985"/>
        <dbReference type="ChEBI" id="CHEBI:30616"/>
        <dbReference type="ChEBI" id="CHEBI:43474"/>
        <dbReference type="ChEBI" id="CHEBI:141005"/>
        <dbReference type="ChEBI" id="CHEBI:456216"/>
        <dbReference type="EC" id="6.3.2.17"/>
    </reaction>
</comment>
<comment type="cofactor">
    <cofactor evidence="1">
        <name>a monovalent cation</name>
        <dbReference type="ChEBI" id="CHEBI:60242"/>
    </cofactor>
    <text evidence="1">A monovalent cation.</text>
</comment>
<comment type="pathway">
    <text>Cofactor biosynthesis; tetrahydrofolylpolyglutamate biosynthesis.</text>
</comment>
<comment type="subcellular location">
    <subcellularLocation>
        <location evidence="1">Mitochondrion inner membrane</location>
    </subcellularLocation>
    <subcellularLocation>
        <location evidence="1">Mitochondrion matrix</location>
    </subcellularLocation>
    <subcellularLocation>
        <location evidence="3 4">Cytoplasm</location>
    </subcellularLocation>
</comment>
<comment type="similarity">
    <text evidence="5">Belongs to the folylpolyglutamate synthase family.</text>
</comment>
<reference key="1">
    <citation type="journal article" date="2002" name="Nature">
        <title>The genome sequence of Schizosaccharomyces pombe.</title>
        <authorList>
            <person name="Wood V."/>
            <person name="Gwilliam R."/>
            <person name="Rajandream M.A."/>
            <person name="Lyne M.H."/>
            <person name="Lyne R."/>
            <person name="Stewart A."/>
            <person name="Sgouros J.G."/>
            <person name="Peat N."/>
            <person name="Hayles J."/>
            <person name="Baker S.G."/>
            <person name="Basham D."/>
            <person name="Bowman S."/>
            <person name="Brooks K."/>
            <person name="Brown D."/>
            <person name="Brown S."/>
            <person name="Chillingworth T."/>
            <person name="Churcher C.M."/>
            <person name="Collins M."/>
            <person name="Connor R."/>
            <person name="Cronin A."/>
            <person name="Davis P."/>
            <person name="Feltwell T."/>
            <person name="Fraser A."/>
            <person name="Gentles S."/>
            <person name="Goble A."/>
            <person name="Hamlin N."/>
            <person name="Harris D.E."/>
            <person name="Hidalgo J."/>
            <person name="Hodgson G."/>
            <person name="Holroyd S."/>
            <person name="Hornsby T."/>
            <person name="Howarth S."/>
            <person name="Huckle E.J."/>
            <person name="Hunt S."/>
            <person name="Jagels K."/>
            <person name="James K.D."/>
            <person name="Jones L."/>
            <person name="Jones M."/>
            <person name="Leather S."/>
            <person name="McDonald S."/>
            <person name="McLean J."/>
            <person name="Mooney P."/>
            <person name="Moule S."/>
            <person name="Mungall K.L."/>
            <person name="Murphy L.D."/>
            <person name="Niblett D."/>
            <person name="Odell C."/>
            <person name="Oliver K."/>
            <person name="O'Neil S."/>
            <person name="Pearson D."/>
            <person name="Quail M.A."/>
            <person name="Rabbinowitsch E."/>
            <person name="Rutherford K.M."/>
            <person name="Rutter S."/>
            <person name="Saunders D."/>
            <person name="Seeger K."/>
            <person name="Sharp S."/>
            <person name="Skelton J."/>
            <person name="Simmonds M.N."/>
            <person name="Squares R."/>
            <person name="Squares S."/>
            <person name="Stevens K."/>
            <person name="Taylor K."/>
            <person name="Taylor R.G."/>
            <person name="Tivey A."/>
            <person name="Walsh S.V."/>
            <person name="Warren T."/>
            <person name="Whitehead S."/>
            <person name="Woodward J.R."/>
            <person name="Volckaert G."/>
            <person name="Aert R."/>
            <person name="Robben J."/>
            <person name="Grymonprez B."/>
            <person name="Weltjens I."/>
            <person name="Vanstreels E."/>
            <person name="Rieger M."/>
            <person name="Schaefer M."/>
            <person name="Mueller-Auer S."/>
            <person name="Gabel C."/>
            <person name="Fuchs M."/>
            <person name="Duesterhoeft A."/>
            <person name="Fritzc C."/>
            <person name="Holzer E."/>
            <person name="Moestl D."/>
            <person name="Hilbert H."/>
            <person name="Borzym K."/>
            <person name="Langer I."/>
            <person name="Beck A."/>
            <person name="Lehrach H."/>
            <person name="Reinhardt R."/>
            <person name="Pohl T.M."/>
            <person name="Eger P."/>
            <person name="Zimmermann W."/>
            <person name="Wedler H."/>
            <person name="Wambutt R."/>
            <person name="Purnelle B."/>
            <person name="Goffeau A."/>
            <person name="Cadieu E."/>
            <person name="Dreano S."/>
            <person name="Gloux S."/>
            <person name="Lelaure V."/>
            <person name="Mottier S."/>
            <person name="Galibert F."/>
            <person name="Aves S.J."/>
            <person name="Xiang Z."/>
            <person name="Hunt C."/>
            <person name="Moore K."/>
            <person name="Hurst S.M."/>
            <person name="Lucas M."/>
            <person name="Rochet M."/>
            <person name="Gaillardin C."/>
            <person name="Tallada V.A."/>
            <person name="Garzon A."/>
            <person name="Thode G."/>
            <person name="Daga R.R."/>
            <person name="Cruzado L."/>
            <person name="Jimenez J."/>
            <person name="Sanchez M."/>
            <person name="del Rey F."/>
            <person name="Benito J."/>
            <person name="Dominguez A."/>
            <person name="Revuelta J.L."/>
            <person name="Moreno S."/>
            <person name="Armstrong J."/>
            <person name="Forsburg S.L."/>
            <person name="Cerutti L."/>
            <person name="Lowe T."/>
            <person name="McCombie W.R."/>
            <person name="Paulsen I."/>
            <person name="Potashkin J."/>
            <person name="Shpakovski G.V."/>
            <person name="Ussery D."/>
            <person name="Barrell B.G."/>
            <person name="Nurse P."/>
        </authorList>
    </citation>
    <scope>NUCLEOTIDE SEQUENCE [LARGE SCALE GENOMIC DNA]</scope>
    <source>
        <strain>972 / ATCC 24843</strain>
    </source>
</reference>
<reference key="2">
    <citation type="journal article" date="2000" name="Genes Cells">
        <title>Large-scale screening of intracellular protein localization in living fission yeast cells by the use of a GFP-fusion genomic DNA library.</title>
        <authorList>
            <person name="Ding D.-Q."/>
            <person name="Tomita Y."/>
            <person name="Yamamoto A."/>
            <person name="Chikashige Y."/>
            <person name="Haraguchi T."/>
            <person name="Hiraoka Y."/>
        </authorList>
    </citation>
    <scope>NUCLEOTIDE SEQUENCE [LARGE SCALE GENOMIC DNA] OF 73-126</scope>
    <scope>SUBCELLULAR LOCATION</scope>
    <source>
        <strain>ATCC 38364 / 968</strain>
    </source>
</reference>
<reference key="3">
    <citation type="journal article" date="1997" name="DNA Res.">
        <title>Identification of open reading frames in Schizosaccharomyces pombe cDNAs.</title>
        <authorList>
            <person name="Yoshioka S."/>
            <person name="Kato K."/>
            <person name="Nakai K."/>
            <person name="Okayama H."/>
            <person name="Nojima H."/>
        </authorList>
    </citation>
    <scope>NUCLEOTIDE SEQUENCE [LARGE SCALE MRNA] OF 161-505</scope>
    <source>
        <strain>PR745</strain>
    </source>
</reference>
<reference key="4">
    <citation type="journal article" date="2006" name="Nat. Biotechnol.">
        <title>ORFeome cloning and global analysis of protein localization in the fission yeast Schizosaccharomyces pombe.</title>
        <authorList>
            <person name="Matsuyama A."/>
            <person name="Arai R."/>
            <person name="Yashiroda Y."/>
            <person name="Shirai A."/>
            <person name="Kamata A."/>
            <person name="Sekido S."/>
            <person name="Kobayashi Y."/>
            <person name="Hashimoto A."/>
            <person name="Hamamoto M."/>
            <person name="Hiraoka Y."/>
            <person name="Horinouchi S."/>
            <person name="Yoshida M."/>
        </authorList>
    </citation>
    <scope>SUBCELLULAR LOCATION [LARGE SCALE ANALYSIS]</scope>
</reference>
<name>FOLE_SCHPO</name>
<feature type="chain" id="PRO_0000168311" description="Probable folylpolyglutamate synthase">
    <location>
        <begin position="1"/>
        <end position="505"/>
    </location>
</feature>
<feature type="binding site" evidence="2">
    <location>
        <begin position="89"/>
        <end position="92"/>
    </location>
    <ligand>
        <name>ATP</name>
        <dbReference type="ChEBI" id="CHEBI:30616"/>
    </ligand>
</feature>
<feature type="binding site" evidence="2">
    <location>
        <position position="121"/>
    </location>
    <ligand>
        <name>Mg(2+)</name>
        <dbReference type="ChEBI" id="CHEBI:18420"/>
        <label>1</label>
    </ligand>
</feature>
<feature type="binding site" evidence="2">
    <location>
        <position position="190"/>
    </location>
    <ligand>
        <name>Mg(2+)</name>
        <dbReference type="ChEBI" id="CHEBI:18420"/>
        <label>1</label>
    </ligand>
</feature>
<feature type="binding site" evidence="2">
    <location>
        <position position="218"/>
    </location>
    <ligand>
        <name>Mg(2+)</name>
        <dbReference type="ChEBI" id="CHEBI:18420"/>
        <label>2</label>
    </ligand>
</feature>
<feature type="binding site" evidence="2">
    <location>
        <position position="332"/>
    </location>
    <ligand>
        <name>ATP</name>
        <dbReference type="ChEBI" id="CHEBI:30616"/>
    </ligand>
</feature>
<feature type="binding site" evidence="2">
    <location>
        <position position="346"/>
    </location>
    <ligand>
        <name>ATP</name>
        <dbReference type="ChEBI" id="CHEBI:30616"/>
    </ligand>
</feature>
<feature type="sequence conflict" description="In Ref. 3; BAA13918." evidence="5" ref="3">
    <original>DSEKPMY</original>
    <variation>QPEIHVL</variation>
    <location>
        <begin position="161"/>
        <end position="167"/>
    </location>
</feature>
<feature type="sequence conflict" description="In Ref. 3; BAA13918." evidence="5" ref="3">
    <original>L</original>
    <variation>F</variation>
    <location>
        <position position="244"/>
    </location>
</feature>
<feature type="sequence conflict" description="In Ref. 3; BAA13918." evidence="5" ref="3">
    <original>E</original>
    <variation>K</variation>
    <location>
        <position position="262"/>
    </location>
</feature>
<feature type="sequence conflict" description="In Ref. 3; BAA13918." evidence="5" ref="3">
    <original>L</original>
    <variation>P</variation>
    <location>
        <position position="294"/>
    </location>
</feature>
<feature type="sequence conflict" description="In Ref. 3; BAA13918." evidence="5" ref="3">
    <original>L</original>
    <variation>F</variation>
    <location>
        <position position="298"/>
    </location>
</feature>
<feature type="sequence conflict" description="In Ref. 3; BAA13918." evidence="5" ref="3">
    <original>K</original>
    <variation>E</variation>
    <location>
        <position position="436"/>
    </location>
</feature>
<feature type="sequence conflict" description="In Ref. 3; BAA13918." evidence="5" ref="3">
    <original>K</original>
    <variation>L</variation>
    <location>
        <position position="447"/>
    </location>
</feature>
<feature type="sequence conflict" description="In Ref. 3; BAA13918." evidence="5" ref="3">
    <original>T</original>
    <variation>A</variation>
    <location>
        <position position="455"/>
    </location>
</feature>
<feature type="sequence conflict" description="In Ref. 3; BAA13918." evidence="5" ref="3">
    <original>EAT</original>
    <variation>VAA</variation>
    <location>
        <begin position="458"/>
        <end position="460"/>
    </location>
</feature>
<feature type="sequence conflict" description="In Ref. 3; BAA13918." evidence="5" ref="3">
    <original>T</original>
    <variation>S</variation>
    <location>
        <position position="464"/>
    </location>
</feature>
<sequence>MHTAKPVKRYFNLKSSRIGMNPQTKTFEGAINRLNSLQSNAKVLEVLRKRGKIPNDQSMVEMRHWLRCIGYQPSDLNRLNVIHVAGTKGKGSTCAFTSSILQQIQKSGERSIPKCIGMYTSPHLRSVCERIQLNGKPISQELFTKYFFDVWERLENAVGSDSEKPMYFRFLTLMAWHVFISENVDAAIIEVGIGGEYDSTNLIEKPYATAVTSLGLDHTSLLGNTIAEIAWQKAGIYKESAIALTCEQAPEAMNVLKNRAAERNTSLKVVIPPAELTPDMIGLSGVHQLGNTSLAVSLVQEFYEKAGCPFDRDPYQDPAILDGLKYVKWPGRCQIEEINNIKWCFDGAHTKESLEATGLWLASKKNLYEDADARILLFNQQSRDDPIALLRSFLKGLESSGTGISFTHVIFSTNVTWKDAGYNPELLSINTITDNKPVLHVQEDLCKWWKESKGTTSEATVAPTIQEAIETVMSIKQKSRNTFVCVTGSLHLTGGVFVVLDQAVF</sequence>
<protein>
    <recommendedName>
        <fullName>Probable folylpolyglutamate synthase</fullName>
        <ecNumber>6.3.2.17</ecNumber>
    </recommendedName>
    <alternativeName>
        <fullName>Folylpoly-gamma-glutamate synthetase</fullName>
        <shortName>FPGS</shortName>
    </alternativeName>
    <alternativeName>
        <fullName>Tetrahydrofolylpolyglutamate synthase</fullName>
        <shortName>Tetrahydrofolate synthase</shortName>
    </alternativeName>
</protein>